<comment type="function">
    <text evidence="1">Specifically methylates the pseudouridine at position 1915 (m3Psi1915) in 23S rRNA.</text>
</comment>
<comment type="catalytic activity">
    <reaction evidence="1">
        <text>pseudouridine(1915) in 23S rRNA + S-adenosyl-L-methionine = N(3)-methylpseudouridine(1915) in 23S rRNA + S-adenosyl-L-homocysteine + H(+)</text>
        <dbReference type="Rhea" id="RHEA:42752"/>
        <dbReference type="Rhea" id="RHEA-COMP:10221"/>
        <dbReference type="Rhea" id="RHEA-COMP:10222"/>
        <dbReference type="ChEBI" id="CHEBI:15378"/>
        <dbReference type="ChEBI" id="CHEBI:57856"/>
        <dbReference type="ChEBI" id="CHEBI:59789"/>
        <dbReference type="ChEBI" id="CHEBI:65314"/>
        <dbReference type="ChEBI" id="CHEBI:74486"/>
        <dbReference type="EC" id="2.1.1.177"/>
    </reaction>
</comment>
<comment type="subunit">
    <text evidence="1">Homodimer.</text>
</comment>
<comment type="subcellular location">
    <subcellularLocation>
        <location evidence="1">Cytoplasm</location>
    </subcellularLocation>
</comment>
<comment type="similarity">
    <text evidence="1">Belongs to the RNA methyltransferase RlmH family.</text>
</comment>
<sequence length="159" mass="18063">MKIRILTIGQKMPAWVLTGFEDYFKRIQPFVQTQVIELPMAKRGKNDSEADILKYCQIEGESILNALKPNETLIALEVGGRELSTEKLADTMKQWMLEGNDVALAIGGPDGLSDQVRKAAAWHWSLSKLTMPHPLVRILLIEQLYRAMSINHNHPYHRA</sequence>
<gene>
    <name evidence="1" type="primary">rlmH</name>
    <name type="ordered locus">ABAYE2761</name>
</gene>
<protein>
    <recommendedName>
        <fullName evidence="1">Ribosomal RNA large subunit methyltransferase H</fullName>
        <ecNumber evidence="1">2.1.1.177</ecNumber>
    </recommendedName>
    <alternativeName>
        <fullName evidence="1">23S rRNA (pseudouridine1915-N3)-methyltransferase</fullName>
    </alternativeName>
    <alternativeName>
        <fullName evidence="1">23S rRNA m3Psi1915 methyltransferase</fullName>
    </alternativeName>
    <alternativeName>
        <fullName evidence="1">rRNA (pseudouridine-N3-)-methyltransferase RlmH</fullName>
    </alternativeName>
</protein>
<accession>B0V9Q3</accession>
<dbReference type="EC" id="2.1.1.177" evidence="1"/>
<dbReference type="EMBL" id="CU459141">
    <property type="protein sequence ID" value="CAM87592.1"/>
    <property type="molecule type" value="Genomic_DNA"/>
</dbReference>
<dbReference type="RefSeq" id="WP_000702193.1">
    <property type="nucleotide sequence ID" value="NZ_JBDGFB010000015.1"/>
</dbReference>
<dbReference type="SMR" id="B0V9Q3"/>
<dbReference type="EnsemblBacteria" id="CAM87592">
    <property type="protein sequence ID" value="CAM87592"/>
    <property type="gene ID" value="ABAYE2761"/>
</dbReference>
<dbReference type="GeneID" id="92892993"/>
<dbReference type="KEGG" id="aby:ABAYE2761"/>
<dbReference type="HOGENOM" id="CLU_100552_1_0_6"/>
<dbReference type="GO" id="GO:0005737">
    <property type="term" value="C:cytoplasm"/>
    <property type="evidence" value="ECO:0007669"/>
    <property type="project" value="UniProtKB-SubCell"/>
</dbReference>
<dbReference type="GO" id="GO:0070038">
    <property type="term" value="F:rRNA (pseudouridine-N3-)-methyltransferase activity"/>
    <property type="evidence" value="ECO:0007669"/>
    <property type="project" value="UniProtKB-UniRule"/>
</dbReference>
<dbReference type="CDD" id="cd18081">
    <property type="entry name" value="RlmH-like"/>
    <property type="match status" value="1"/>
</dbReference>
<dbReference type="Gene3D" id="3.40.1280.10">
    <property type="match status" value="1"/>
</dbReference>
<dbReference type="HAMAP" id="MF_00658">
    <property type="entry name" value="23SrRNA_methyltr_H"/>
    <property type="match status" value="1"/>
</dbReference>
<dbReference type="InterPro" id="IPR029028">
    <property type="entry name" value="Alpha/beta_knot_MTases"/>
</dbReference>
<dbReference type="InterPro" id="IPR003742">
    <property type="entry name" value="RlmH-like"/>
</dbReference>
<dbReference type="InterPro" id="IPR029026">
    <property type="entry name" value="tRNA_m1G_MTases_N"/>
</dbReference>
<dbReference type="NCBIfam" id="NF000986">
    <property type="entry name" value="PRK00103.1-4"/>
    <property type="match status" value="1"/>
</dbReference>
<dbReference type="NCBIfam" id="TIGR00246">
    <property type="entry name" value="tRNA_RlmH_YbeA"/>
    <property type="match status" value="1"/>
</dbReference>
<dbReference type="PANTHER" id="PTHR33603">
    <property type="entry name" value="METHYLTRANSFERASE"/>
    <property type="match status" value="1"/>
</dbReference>
<dbReference type="PANTHER" id="PTHR33603:SF1">
    <property type="entry name" value="RIBOSOMAL RNA LARGE SUBUNIT METHYLTRANSFERASE H"/>
    <property type="match status" value="1"/>
</dbReference>
<dbReference type="Pfam" id="PF02590">
    <property type="entry name" value="SPOUT_MTase"/>
    <property type="match status" value="1"/>
</dbReference>
<dbReference type="PIRSF" id="PIRSF004505">
    <property type="entry name" value="MT_bac"/>
    <property type="match status" value="1"/>
</dbReference>
<dbReference type="SUPFAM" id="SSF75217">
    <property type="entry name" value="alpha/beta knot"/>
    <property type="match status" value="1"/>
</dbReference>
<keyword id="KW-0963">Cytoplasm</keyword>
<keyword id="KW-0489">Methyltransferase</keyword>
<keyword id="KW-0698">rRNA processing</keyword>
<keyword id="KW-0949">S-adenosyl-L-methionine</keyword>
<keyword id="KW-0808">Transferase</keyword>
<name>RLMH_ACIBY</name>
<reference key="1">
    <citation type="journal article" date="2008" name="PLoS ONE">
        <title>Comparative analysis of Acinetobacters: three genomes for three lifestyles.</title>
        <authorList>
            <person name="Vallenet D."/>
            <person name="Nordmann P."/>
            <person name="Barbe V."/>
            <person name="Poirel L."/>
            <person name="Mangenot S."/>
            <person name="Bataille E."/>
            <person name="Dossat C."/>
            <person name="Gas S."/>
            <person name="Kreimeyer A."/>
            <person name="Lenoble P."/>
            <person name="Oztas S."/>
            <person name="Poulain J."/>
            <person name="Segurens B."/>
            <person name="Robert C."/>
            <person name="Abergel C."/>
            <person name="Claverie J.-M."/>
            <person name="Raoult D."/>
            <person name="Medigue C."/>
            <person name="Weissenbach J."/>
            <person name="Cruveiller S."/>
        </authorList>
    </citation>
    <scope>NUCLEOTIDE SEQUENCE [LARGE SCALE GENOMIC DNA]</scope>
    <source>
        <strain>AYE</strain>
    </source>
</reference>
<proteinExistence type="inferred from homology"/>
<feature type="chain" id="PRO_0000366552" description="Ribosomal RNA large subunit methyltransferase H">
    <location>
        <begin position="1"/>
        <end position="159"/>
    </location>
</feature>
<feature type="binding site" evidence="1">
    <location>
        <position position="76"/>
    </location>
    <ligand>
        <name>S-adenosyl-L-methionine</name>
        <dbReference type="ChEBI" id="CHEBI:59789"/>
    </ligand>
</feature>
<feature type="binding site" evidence="1">
    <location>
        <position position="107"/>
    </location>
    <ligand>
        <name>S-adenosyl-L-methionine</name>
        <dbReference type="ChEBI" id="CHEBI:59789"/>
    </ligand>
</feature>
<feature type="binding site" evidence="1">
    <location>
        <begin position="126"/>
        <end position="131"/>
    </location>
    <ligand>
        <name>S-adenosyl-L-methionine</name>
        <dbReference type="ChEBI" id="CHEBI:59789"/>
    </ligand>
</feature>
<evidence type="ECO:0000255" key="1">
    <source>
        <dbReference type="HAMAP-Rule" id="MF_00658"/>
    </source>
</evidence>
<organism>
    <name type="scientific">Acinetobacter baumannii (strain AYE)</name>
    <dbReference type="NCBI Taxonomy" id="509173"/>
    <lineage>
        <taxon>Bacteria</taxon>
        <taxon>Pseudomonadati</taxon>
        <taxon>Pseudomonadota</taxon>
        <taxon>Gammaproteobacteria</taxon>
        <taxon>Moraxellales</taxon>
        <taxon>Moraxellaceae</taxon>
        <taxon>Acinetobacter</taxon>
        <taxon>Acinetobacter calcoaceticus/baumannii complex</taxon>
    </lineage>
</organism>